<accession>A9W739</accession>
<evidence type="ECO:0000255" key="1">
    <source>
        <dbReference type="HAMAP-Rule" id="MF_01043"/>
    </source>
</evidence>
<comment type="function">
    <text evidence="1">Catalyzes the transfer of an acyl group from acyl-phosphate (acyl-PO(4)) to glycerol-3-phosphate (G3P) to form lysophosphatidic acid (LPA). This enzyme utilizes acyl-phosphate as fatty acyl donor, but not acyl-CoA or acyl-ACP.</text>
</comment>
<comment type="catalytic activity">
    <reaction evidence="1">
        <text>an acyl phosphate + sn-glycerol 3-phosphate = a 1-acyl-sn-glycero-3-phosphate + phosphate</text>
        <dbReference type="Rhea" id="RHEA:34075"/>
        <dbReference type="ChEBI" id="CHEBI:43474"/>
        <dbReference type="ChEBI" id="CHEBI:57597"/>
        <dbReference type="ChEBI" id="CHEBI:57970"/>
        <dbReference type="ChEBI" id="CHEBI:59918"/>
        <dbReference type="EC" id="2.3.1.275"/>
    </reaction>
</comment>
<comment type="pathway">
    <text evidence="1">Lipid metabolism; phospholipid metabolism.</text>
</comment>
<comment type="subunit">
    <text evidence="1">Probably interacts with PlsX.</text>
</comment>
<comment type="subcellular location">
    <subcellularLocation>
        <location evidence="1">Cell inner membrane</location>
        <topology evidence="1">Multi-pass membrane protein</topology>
    </subcellularLocation>
</comment>
<comment type="similarity">
    <text evidence="1">Belongs to the PlsY family.</text>
</comment>
<sequence length="202" mass="20369">MTTLLAAGWPVLIAALVLGYACGAIPFGLILTKFAGLGDVRAIGSGNIGATNVLRTGRKGLAAATLLCDALKGTLPVLAASHWGEGPALAAGLGAFLGHLFPVWLGFKGGKGVATFIGVLLALSPVTLAAFAAIWLGLAFALKYSSLSALAASAATPLILWALGHGAVAALFLVLAALLWWKHAPNIRRLAAGTEGRIGKKG</sequence>
<proteinExistence type="inferred from homology"/>
<reference key="1">
    <citation type="submission" date="2007-12" db="EMBL/GenBank/DDBJ databases">
        <title>Complete sequence of Methylobacterium extorquens PA1.</title>
        <authorList>
            <consortium name="US DOE Joint Genome Institute"/>
            <person name="Copeland A."/>
            <person name="Lucas S."/>
            <person name="Lapidus A."/>
            <person name="Barry K."/>
            <person name="Glavina del Rio T."/>
            <person name="Dalin E."/>
            <person name="Tice H."/>
            <person name="Pitluck S."/>
            <person name="Saunders E."/>
            <person name="Brettin T."/>
            <person name="Bruce D."/>
            <person name="Detter J.C."/>
            <person name="Han C."/>
            <person name="Schmutz J."/>
            <person name="Larimer F."/>
            <person name="Land M."/>
            <person name="Hauser L."/>
            <person name="Kyrpides N."/>
            <person name="Kim E."/>
            <person name="Marx C."/>
            <person name="Richardson P."/>
        </authorList>
    </citation>
    <scope>NUCLEOTIDE SEQUENCE [LARGE SCALE GENOMIC DNA]</scope>
    <source>
        <strain>PA1</strain>
    </source>
</reference>
<dbReference type="EC" id="2.3.1.275" evidence="1"/>
<dbReference type="EMBL" id="CP000908">
    <property type="protein sequence ID" value="ABY31701.1"/>
    <property type="molecule type" value="Genomic_DNA"/>
</dbReference>
<dbReference type="RefSeq" id="WP_012254580.1">
    <property type="nucleotide sequence ID" value="NC_010172.1"/>
</dbReference>
<dbReference type="SMR" id="A9W739"/>
<dbReference type="KEGG" id="mex:Mext_3314"/>
<dbReference type="eggNOG" id="COG0344">
    <property type="taxonomic scope" value="Bacteria"/>
</dbReference>
<dbReference type="HOGENOM" id="CLU_081254_1_0_5"/>
<dbReference type="BioCyc" id="MEXT419610:MEXT_RS16650-MONOMER"/>
<dbReference type="UniPathway" id="UPA00085"/>
<dbReference type="GO" id="GO:0005886">
    <property type="term" value="C:plasma membrane"/>
    <property type="evidence" value="ECO:0007669"/>
    <property type="project" value="UniProtKB-SubCell"/>
</dbReference>
<dbReference type="GO" id="GO:0043772">
    <property type="term" value="F:acyl-phosphate glycerol-3-phosphate acyltransferase activity"/>
    <property type="evidence" value="ECO:0007669"/>
    <property type="project" value="UniProtKB-UniRule"/>
</dbReference>
<dbReference type="GO" id="GO:0008654">
    <property type="term" value="P:phospholipid biosynthetic process"/>
    <property type="evidence" value="ECO:0007669"/>
    <property type="project" value="UniProtKB-UniRule"/>
</dbReference>
<dbReference type="HAMAP" id="MF_01043">
    <property type="entry name" value="PlsY"/>
    <property type="match status" value="1"/>
</dbReference>
<dbReference type="InterPro" id="IPR003811">
    <property type="entry name" value="G3P_acylTferase_PlsY"/>
</dbReference>
<dbReference type="NCBIfam" id="TIGR00023">
    <property type="entry name" value="glycerol-3-phosphate 1-O-acyltransferase PlsY"/>
    <property type="match status" value="1"/>
</dbReference>
<dbReference type="PANTHER" id="PTHR30309:SF0">
    <property type="entry name" value="GLYCEROL-3-PHOSPHATE ACYLTRANSFERASE-RELATED"/>
    <property type="match status" value="1"/>
</dbReference>
<dbReference type="PANTHER" id="PTHR30309">
    <property type="entry name" value="INNER MEMBRANE PROTEIN YGIH"/>
    <property type="match status" value="1"/>
</dbReference>
<dbReference type="Pfam" id="PF02660">
    <property type="entry name" value="G3P_acyltransf"/>
    <property type="match status" value="1"/>
</dbReference>
<dbReference type="SMART" id="SM01207">
    <property type="entry name" value="G3P_acyltransf"/>
    <property type="match status" value="1"/>
</dbReference>
<feature type="chain" id="PRO_1000136099" description="Glycerol-3-phosphate acyltransferase">
    <location>
        <begin position="1"/>
        <end position="202"/>
    </location>
</feature>
<feature type="transmembrane region" description="Helical" evidence="1">
    <location>
        <begin position="11"/>
        <end position="31"/>
    </location>
</feature>
<feature type="transmembrane region" description="Helical" evidence="1">
    <location>
        <begin position="87"/>
        <end position="107"/>
    </location>
</feature>
<feature type="transmembrane region" description="Helical" evidence="1">
    <location>
        <begin position="116"/>
        <end position="136"/>
    </location>
</feature>
<feature type="transmembrane region" description="Helical" evidence="1">
    <location>
        <begin position="158"/>
        <end position="178"/>
    </location>
</feature>
<name>PLSY_METEP</name>
<keyword id="KW-0997">Cell inner membrane</keyword>
<keyword id="KW-1003">Cell membrane</keyword>
<keyword id="KW-0444">Lipid biosynthesis</keyword>
<keyword id="KW-0443">Lipid metabolism</keyword>
<keyword id="KW-0472">Membrane</keyword>
<keyword id="KW-0594">Phospholipid biosynthesis</keyword>
<keyword id="KW-1208">Phospholipid metabolism</keyword>
<keyword id="KW-0808">Transferase</keyword>
<keyword id="KW-0812">Transmembrane</keyword>
<keyword id="KW-1133">Transmembrane helix</keyword>
<protein>
    <recommendedName>
        <fullName evidence="1">Glycerol-3-phosphate acyltransferase</fullName>
    </recommendedName>
    <alternativeName>
        <fullName evidence="1">Acyl-PO4 G3P acyltransferase</fullName>
    </alternativeName>
    <alternativeName>
        <fullName evidence="1">Acyl-phosphate--glycerol-3-phosphate acyltransferase</fullName>
    </alternativeName>
    <alternativeName>
        <fullName evidence="1">G3P acyltransferase</fullName>
        <shortName evidence="1">GPAT</shortName>
        <ecNumber evidence="1">2.3.1.275</ecNumber>
    </alternativeName>
    <alternativeName>
        <fullName evidence="1">Lysophosphatidic acid synthase</fullName>
        <shortName evidence="1">LPA synthase</shortName>
    </alternativeName>
</protein>
<organism>
    <name type="scientific">Methylorubrum extorquens (strain PA1)</name>
    <name type="common">Methylobacterium extorquens</name>
    <dbReference type="NCBI Taxonomy" id="419610"/>
    <lineage>
        <taxon>Bacteria</taxon>
        <taxon>Pseudomonadati</taxon>
        <taxon>Pseudomonadota</taxon>
        <taxon>Alphaproteobacteria</taxon>
        <taxon>Hyphomicrobiales</taxon>
        <taxon>Methylobacteriaceae</taxon>
        <taxon>Methylorubrum</taxon>
    </lineage>
</organism>
<gene>
    <name evidence="1" type="primary">plsY</name>
    <name type="ordered locus">Mext_3314</name>
</gene>